<sequence>MTTETTTTKIIEANEIMKLLPHRYPFLLVDRVVDYEEGKWLKAVKNISVNEPCFTGHFPEQPIFPGVLILEAMAQATGVLACKTYRQLENEIYYFAAIDNARFKRPVLPGDQMVLEVHFLKERRGITRFTGVATVDGQVVCEAELMCARRPA</sequence>
<accession>Q9CJK9</accession>
<organism>
    <name type="scientific">Pasteurella multocida (strain Pm70)</name>
    <dbReference type="NCBI Taxonomy" id="272843"/>
    <lineage>
        <taxon>Bacteria</taxon>
        <taxon>Pseudomonadati</taxon>
        <taxon>Pseudomonadota</taxon>
        <taxon>Gammaproteobacteria</taxon>
        <taxon>Pasteurellales</taxon>
        <taxon>Pasteurellaceae</taxon>
        <taxon>Pasteurella</taxon>
    </lineage>
</organism>
<comment type="function">
    <text evidence="1">Involved in unsaturated fatty acids biosynthesis. Catalyzes the dehydration of short chain beta-hydroxyacyl-ACPs and long chain saturated and unsaturated beta-hydroxyacyl-ACPs.</text>
</comment>
<comment type="catalytic activity">
    <reaction evidence="1">
        <text>a (3R)-hydroxyacyl-[ACP] = a (2E)-enoyl-[ACP] + H2O</text>
        <dbReference type="Rhea" id="RHEA:13097"/>
        <dbReference type="Rhea" id="RHEA-COMP:9925"/>
        <dbReference type="Rhea" id="RHEA-COMP:9945"/>
        <dbReference type="ChEBI" id="CHEBI:15377"/>
        <dbReference type="ChEBI" id="CHEBI:78784"/>
        <dbReference type="ChEBI" id="CHEBI:78827"/>
        <dbReference type="EC" id="4.2.1.59"/>
    </reaction>
</comment>
<comment type="subcellular location">
    <subcellularLocation>
        <location evidence="1">Cytoplasm</location>
    </subcellularLocation>
</comment>
<comment type="similarity">
    <text evidence="1">Belongs to the thioester dehydratase family. FabZ subfamily.</text>
</comment>
<protein>
    <recommendedName>
        <fullName evidence="1">3-hydroxyacyl-[acyl-carrier-protein] dehydratase FabZ</fullName>
        <ecNumber evidence="1">4.2.1.59</ecNumber>
    </recommendedName>
    <alternativeName>
        <fullName evidence="1">(3R)-hydroxymyristoyl-[acyl-carrier-protein] dehydratase</fullName>
        <shortName evidence="1">(3R)-hydroxymyristoyl-ACP dehydrase</shortName>
    </alternativeName>
    <alternativeName>
        <fullName evidence="1">Beta-hydroxyacyl-ACP dehydratase</fullName>
    </alternativeName>
</protein>
<name>FABZ_PASMU</name>
<gene>
    <name evidence="1" type="primary">fabZ</name>
    <name type="ordered locus">PM1995</name>
</gene>
<keyword id="KW-0963">Cytoplasm</keyword>
<keyword id="KW-0441">Lipid A biosynthesis</keyword>
<keyword id="KW-0444">Lipid biosynthesis</keyword>
<keyword id="KW-0443">Lipid metabolism</keyword>
<keyword id="KW-0456">Lyase</keyword>
<keyword id="KW-1185">Reference proteome</keyword>
<proteinExistence type="inferred from homology"/>
<reference key="1">
    <citation type="journal article" date="2001" name="Proc. Natl. Acad. Sci. U.S.A.">
        <title>Complete genomic sequence of Pasteurella multocida Pm70.</title>
        <authorList>
            <person name="May B.J."/>
            <person name="Zhang Q."/>
            <person name="Li L.L."/>
            <person name="Paustian M.L."/>
            <person name="Whittam T.S."/>
            <person name="Kapur V."/>
        </authorList>
    </citation>
    <scope>NUCLEOTIDE SEQUENCE [LARGE SCALE GENOMIC DNA]</scope>
    <source>
        <strain>Pm70</strain>
    </source>
</reference>
<feature type="chain" id="PRO_0000091707" description="3-hydroxyacyl-[acyl-carrier-protein] dehydratase FabZ">
    <location>
        <begin position="1"/>
        <end position="152"/>
    </location>
</feature>
<feature type="active site" evidence="1">
    <location>
        <position position="57"/>
    </location>
</feature>
<evidence type="ECO:0000255" key="1">
    <source>
        <dbReference type="HAMAP-Rule" id="MF_00406"/>
    </source>
</evidence>
<dbReference type="EC" id="4.2.1.59" evidence="1"/>
<dbReference type="EMBL" id="AE004439">
    <property type="protein sequence ID" value="AAK04079.1"/>
    <property type="molecule type" value="Genomic_DNA"/>
</dbReference>
<dbReference type="RefSeq" id="WP_005719526.1">
    <property type="nucleotide sequence ID" value="NC_002663.1"/>
</dbReference>
<dbReference type="SMR" id="Q9CJK9"/>
<dbReference type="STRING" id="272843.PM1995"/>
<dbReference type="EnsemblBacteria" id="AAK04079">
    <property type="protein sequence ID" value="AAK04079"/>
    <property type="gene ID" value="PM1995"/>
</dbReference>
<dbReference type="GeneID" id="77207322"/>
<dbReference type="KEGG" id="pmu:PM1995"/>
<dbReference type="HOGENOM" id="CLU_078912_1_0_6"/>
<dbReference type="Proteomes" id="UP000000809">
    <property type="component" value="Chromosome"/>
</dbReference>
<dbReference type="GO" id="GO:0005737">
    <property type="term" value="C:cytoplasm"/>
    <property type="evidence" value="ECO:0007669"/>
    <property type="project" value="UniProtKB-SubCell"/>
</dbReference>
<dbReference type="GO" id="GO:0016020">
    <property type="term" value="C:membrane"/>
    <property type="evidence" value="ECO:0007669"/>
    <property type="project" value="GOC"/>
</dbReference>
<dbReference type="GO" id="GO:0019171">
    <property type="term" value="F:(3R)-hydroxyacyl-[acyl-carrier-protein] dehydratase activity"/>
    <property type="evidence" value="ECO:0007669"/>
    <property type="project" value="UniProtKB-EC"/>
</dbReference>
<dbReference type="GO" id="GO:0006633">
    <property type="term" value="P:fatty acid biosynthetic process"/>
    <property type="evidence" value="ECO:0007669"/>
    <property type="project" value="UniProtKB-UniRule"/>
</dbReference>
<dbReference type="GO" id="GO:0009245">
    <property type="term" value="P:lipid A biosynthetic process"/>
    <property type="evidence" value="ECO:0007669"/>
    <property type="project" value="UniProtKB-UniRule"/>
</dbReference>
<dbReference type="CDD" id="cd01288">
    <property type="entry name" value="FabZ"/>
    <property type="match status" value="1"/>
</dbReference>
<dbReference type="FunFam" id="3.10.129.10:FF:000001">
    <property type="entry name" value="3-hydroxyacyl-[acyl-carrier-protein] dehydratase FabZ"/>
    <property type="match status" value="1"/>
</dbReference>
<dbReference type="Gene3D" id="3.10.129.10">
    <property type="entry name" value="Hotdog Thioesterase"/>
    <property type="match status" value="1"/>
</dbReference>
<dbReference type="HAMAP" id="MF_00406">
    <property type="entry name" value="FabZ"/>
    <property type="match status" value="1"/>
</dbReference>
<dbReference type="InterPro" id="IPR013114">
    <property type="entry name" value="FabA_FabZ"/>
</dbReference>
<dbReference type="InterPro" id="IPR010084">
    <property type="entry name" value="FabZ"/>
</dbReference>
<dbReference type="InterPro" id="IPR029069">
    <property type="entry name" value="HotDog_dom_sf"/>
</dbReference>
<dbReference type="NCBIfam" id="TIGR01750">
    <property type="entry name" value="fabZ"/>
    <property type="match status" value="1"/>
</dbReference>
<dbReference type="NCBIfam" id="NF000582">
    <property type="entry name" value="PRK00006.1"/>
    <property type="match status" value="1"/>
</dbReference>
<dbReference type="PANTHER" id="PTHR30272">
    <property type="entry name" value="3-HYDROXYACYL-[ACYL-CARRIER-PROTEIN] DEHYDRATASE"/>
    <property type="match status" value="1"/>
</dbReference>
<dbReference type="PANTHER" id="PTHR30272:SF1">
    <property type="entry name" value="3-HYDROXYACYL-[ACYL-CARRIER-PROTEIN] DEHYDRATASE"/>
    <property type="match status" value="1"/>
</dbReference>
<dbReference type="Pfam" id="PF07977">
    <property type="entry name" value="FabA"/>
    <property type="match status" value="1"/>
</dbReference>
<dbReference type="SUPFAM" id="SSF54637">
    <property type="entry name" value="Thioesterase/thiol ester dehydrase-isomerase"/>
    <property type="match status" value="1"/>
</dbReference>